<comment type="function">
    <text evidence="1">Represses ulaG and the ulaABCDEF operon.</text>
</comment>
<comment type="subcellular location">
    <subcellularLocation>
        <location evidence="1">Cytoplasm</location>
    </subcellularLocation>
</comment>
<name>ULAR_SALA4</name>
<protein>
    <recommendedName>
        <fullName evidence="1">HTH-type transcriptional regulator UlaR</fullName>
    </recommendedName>
</protein>
<gene>
    <name evidence="1" type="primary">ulaR</name>
    <name type="ordered locus">SeAg_B4659</name>
</gene>
<feature type="chain" id="PRO_1000190471" description="HTH-type transcriptional regulator UlaR">
    <location>
        <begin position="1"/>
        <end position="251"/>
    </location>
</feature>
<feature type="domain" description="HTH deoR-type" evidence="1">
    <location>
        <begin position="3"/>
        <end position="58"/>
    </location>
</feature>
<feature type="DNA-binding region" description="H-T-H motif" evidence="1">
    <location>
        <begin position="20"/>
        <end position="39"/>
    </location>
</feature>
<proteinExistence type="inferred from homology"/>
<accession>B5F3A7</accession>
<reference key="1">
    <citation type="journal article" date="2011" name="J. Bacteriol.">
        <title>Comparative genomics of 28 Salmonella enterica isolates: evidence for CRISPR-mediated adaptive sublineage evolution.</title>
        <authorList>
            <person name="Fricke W.F."/>
            <person name="Mammel M.K."/>
            <person name="McDermott P.F."/>
            <person name="Tartera C."/>
            <person name="White D.G."/>
            <person name="Leclerc J.E."/>
            <person name="Ravel J."/>
            <person name="Cebula T.A."/>
        </authorList>
    </citation>
    <scope>NUCLEOTIDE SEQUENCE [LARGE SCALE GENOMIC DNA]</scope>
    <source>
        <strain>SL483</strain>
    </source>
</reference>
<organism>
    <name type="scientific">Salmonella agona (strain SL483)</name>
    <dbReference type="NCBI Taxonomy" id="454166"/>
    <lineage>
        <taxon>Bacteria</taxon>
        <taxon>Pseudomonadati</taxon>
        <taxon>Pseudomonadota</taxon>
        <taxon>Gammaproteobacteria</taxon>
        <taxon>Enterobacterales</taxon>
        <taxon>Enterobacteriaceae</taxon>
        <taxon>Salmonella</taxon>
    </lineage>
</organism>
<sequence length="251" mass="27487">MTEAQRHQILLDMLAQLGFVTVENVIERLGISPATARRDINKLDESGKLKKVRNGAEAITQQRPRWTPMNLHQAQNHDEKVRIAKAASQLVNPGESVVINCGSTAFLLGREMCGKPVQIITNYLPLANYLIDQEHDSVIIMGGQYNKSQSITLSPQGSENSLYAGHWMFTSGKGLTADGLYKTDMLTAMAEQKMLSVVGKLVALVDSSKIGERAGMLFSRADQIAMLITGKNANPQVLQQLEAQGVSILRV</sequence>
<keyword id="KW-0963">Cytoplasm</keyword>
<keyword id="KW-0238">DNA-binding</keyword>
<keyword id="KW-0678">Repressor</keyword>
<keyword id="KW-0804">Transcription</keyword>
<keyword id="KW-0805">Transcription regulation</keyword>
<evidence type="ECO:0000255" key="1">
    <source>
        <dbReference type="HAMAP-Rule" id="MF_01563"/>
    </source>
</evidence>
<dbReference type="EMBL" id="CP001138">
    <property type="protein sequence ID" value="ACH52645.1"/>
    <property type="molecule type" value="Genomic_DNA"/>
</dbReference>
<dbReference type="RefSeq" id="WP_000133618.1">
    <property type="nucleotide sequence ID" value="NC_011149.1"/>
</dbReference>
<dbReference type="SMR" id="B5F3A7"/>
<dbReference type="KEGG" id="sea:SeAg_B4659"/>
<dbReference type="HOGENOM" id="CLU_060699_3_2_6"/>
<dbReference type="Proteomes" id="UP000008819">
    <property type="component" value="Chromosome"/>
</dbReference>
<dbReference type="GO" id="GO:0005737">
    <property type="term" value="C:cytoplasm"/>
    <property type="evidence" value="ECO:0007669"/>
    <property type="project" value="UniProtKB-SubCell"/>
</dbReference>
<dbReference type="GO" id="GO:0003677">
    <property type="term" value="F:DNA binding"/>
    <property type="evidence" value="ECO:0007669"/>
    <property type="project" value="UniProtKB-KW"/>
</dbReference>
<dbReference type="GO" id="GO:0003700">
    <property type="term" value="F:DNA-binding transcription factor activity"/>
    <property type="evidence" value="ECO:0007669"/>
    <property type="project" value="InterPro"/>
</dbReference>
<dbReference type="GO" id="GO:0045892">
    <property type="term" value="P:negative regulation of DNA-templated transcription"/>
    <property type="evidence" value="ECO:0007669"/>
    <property type="project" value="UniProtKB-UniRule"/>
</dbReference>
<dbReference type="FunFam" id="1.10.10.10:FF:000160">
    <property type="entry name" value="HTH-type transcriptional regulator UlaR"/>
    <property type="match status" value="1"/>
</dbReference>
<dbReference type="Gene3D" id="1.10.10.10">
    <property type="entry name" value="Winged helix-like DNA-binding domain superfamily/Winged helix DNA-binding domain"/>
    <property type="match status" value="1"/>
</dbReference>
<dbReference type="HAMAP" id="MF_01563">
    <property type="entry name" value="HTH_type_UlaR"/>
    <property type="match status" value="1"/>
</dbReference>
<dbReference type="InterPro" id="IPR050313">
    <property type="entry name" value="Carb_Metab_HTH_regulators"/>
</dbReference>
<dbReference type="InterPro" id="IPR014036">
    <property type="entry name" value="DeoR-like_C"/>
</dbReference>
<dbReference type="InterPro" id="IPR001034">
    <property type="entry name" value="DeoR_HTH"/>
</dbReference>
<dbReference type="InterPro" id="IPR037171">
    <property type="entry name" value="NagB/RpiA_transferase-like"/>
</dbReference>
<dbReference type="InterPro" id="IPR018356">
    <property type="entry name" value="Tscrpt_reg_HTH_DeoR_CS"/>
</dbReference>
<dbReference type="InterPro" id="IPR023711">
    <property type="entry name" value="Tscrpt_reg_HTH_UlaR"/>
</dbReference>
<dbReference type="InterPro" id="IPR036388">
    <property type="entry name" value="WH-like_DNA-bd_sf"/>
</dbReference>
<dbReference type="InterPro" id="IPR036390">
    <property type="entry name" value="WH_DNA-bd_sf"/>
</dbReference>
<dbReference type="NCBIfam" id="NF010034">
    <property type="entry name" value="PRK13509.1"/>
    <property type="match status" value="1"/>
</dbReference>
<dbReference type="PANTHER" id="PTHR30363">
    <property type="entry name" value="HTH-TYPE TRANSCRIPTIONAL REGULATOR SRLR-RELATED"/>
    <property type="match status" value="1"/>
</dbReference>
<dbReference type="PANTHER" id="PTHR30363:SF55">
    <property type="entry name" value="HTH-TYPE TRANSCRIPTIONAL REGULATOR ULAR"/>
    <property type="match status" value="1"/>
</dbReference>
<dbReference type="Pfam" id="PF00455">
    <property type="entry name" value="DeoRC"/>
    <property type="match status" value="1"/>
</dbReference>
<dbReference type="Pfam" id="PF08220">
    <property type="entry name" value="HTH_DeoR"/>
    <property type="match status" value="1"/>
</dbReference>
<dbReference type="PRINTS" id="PR00037">
    <property type="entry name" value="HTHLACR"/>
</dbReference>
<dbReference type="SMART" id="SM01134">
    <property type="entry name" value="DeoRC"/>
    <property type="match status" value="1"/>
</dbReference>
<dbReference type="SMART" id="SM00420">
    <property type="entry name" value="HTH_DEOR"/>
    <property type="match status" value="1"/>
</dbReference>
<dbReference type="SUPFAM" id="SSF100950">
    <property type="entry name" value="NagB/RpiA/CoA transferase-like"/>
    <property type="match status" value="1"/>
</dbReference>
<dbReference type="SUPFAM" id="SSF46785">
    <property type="entry name" value="Winged helix' DNA-binding domain"/>
    <property type="match status" value="1"/>
</dbReference>
<dbReference type="PROSITE" id="PS00894">
    <property type="entry name" value="HTH_DEOR_1"/>
    <property type="match status" value="1"/>
</dbReference>
<dbReference type="PROSITE" id="PS51000">
    <property type="entry name" value="HTH_DEOR_2"/>
    <property type="match status" value="1"/>
</dbReference>